<dbReference type="EC" id="2.6.1.11" evidence="1"/>
<dbReference type="EMBL" id="AE015451">
    <property type="protein sequence ID" value="AAN70056.1"/>
    <property type="molecule type" value="Genomic_DNA"/>
</dbReference>
<dbReference type="RefSeq" id="NP_746592.1">
    <property type="nucleotide sequence ID" value="NC_002947.4"/>
</dbReference>
<dbReference type="RefSeq" id="WP_010955178.1">
    <property type="nucleotide sequence ID" value="NZ_CP169744.1"/>
</dbReference>
<dbReference type="SMR" id="P59319"/>
<dbReference type="STRING" id="160488.PP_4481"/>
<dbReference type="PaxDb" id="160488-PP_4481"/>
<dbReference type="KEGG" id="ppu:PP_4481"/>
<dbReference type="PATRIC" id="fig|160488.4.peg.4767"/>
<dbReference type="eggNOG" id="COG4992">
    <property type="taxonomic scope" value="Bacteria"/>
</dbReference>
<dbReference type="HOGENOM" id="CLU_016922_10_1_6"/>
<dbReference type="OrthoDB" id="9801052at2"/>
<dbReference type="PhylomeDB" id="P59319"/>
<dbReference type="BioCyc" id="PPUT160488:G1G01-4782-MONOMER"/>
<dbReference type="UniPathway" id="UPA00068">
    <property type="reaction ID" value="UER00109"/>
</dbReference>
<dbReference type="Proteomes" id="UP000000556">
    <property type="component" value="Chromosome"/>
</dbReference>
<dbReference type="GO" id="GO:0005737">
    <property type="term" value="C:cytoplasm"/>
    <property type="evidence" value="ECO:0007669"/>
    <property type="project" value="UniProtKB-SubCell"/>
</dbReference>
<dbReference type="GO" id="GO:0042802">
    <property type="term" value="F:identical protein binding"/>
    <property type="evidence" value="ECO:0007669"/>
    <property type="project" value="TreeGrafter"/>
</dbReference>
<dbReference type="GO" id="GO:0003992">
    <property type="term" value="F:N2-acetyl-L-ornithine:2-oxoglutarate 5-aminotransferase activity"/>
    <property type="evidence" value="ECO:0007669"/>
    <property type="project" value="UniProtKB-UniRule"/>
</dbReference>
<dbReference type="GO" id="GO:0030170">
    <property type="term" value="F:pyridoxal phosphate binding"/>
    <property type="evidence" value="ECO:0007669"/>
    <property type="project" value="InterPro"/>
</dbReference>
<dbReference type="GO" id="GO:0006526">
    <property type="term" value="P:L-arginine biosynthetic process"/>
    <property type="evidence" value="ECO:0007669"/>
    <property type="project" value="UniProtKB-UniRule"/>
</dbReference>
<dbReference type="CDD" id="cd00610">
    <property type="entry name" value="OAT_like"/>
    <property type="match status" value="1"/>
</dbReference>
<dbReference type="FunFam" id="3.40.640.10:FF:000004">
    <property type="entry name" value="Acetylornithine aminotransferase"/>
    <property type="match status" value="1"/>
</dbReference>
<dbReference type="Gene3D" id="3.90.1150.10">
    <property type="entry name" value="Aspartate Aminotransferase, domain 1"/>
    <property type="match status" value="1"/>
</dbReference>
<dbReference type="Gene3D" id="3.40.640.10">
    <property type="entry name" value="Type I PLP-dependent aspartate aminotransferase-like (Major domain)"/>
    <property type="match status" value="1"/>
</dbReference>
<dbReference type="HAMAP" id="MF_01107">
    <property type="entry name" value="ArgD_aminotrans_3"/>
    <property type="match status" value="1"/>
</dbReference>
<dbReference type="InterPro" id="IPR017652">
    <property type="entry name" value="Ac/SucOrn_transaminase_bac"/>
</dbReference>
<dbReference type="InterPro" id="IPR004636">
    <property type="entry name" value="AcOrn/SuccOrn_fam"/>
</dbReference>
<dbReference type="InterPro" id="IPR005814">
    <property type="entry name" value="Aminotrans_3"/>
</dbReference>
<dbReference type="InterPro" id="IPR049704">
    <property type="entry name" value="Aminotrans_3_PPA_site"/>
</dbReference>
<dbReference type="InterPro" id="IPR050103">
    <property type="entry name" value="Class-III_PLP-dep_AT"/>
</dbReference>
<dbReference type="InterPro" id="IPR015424">
    <property type="entry name" value="PyrdxlP-dep_Trfase"/>
</dbReference>
<dbReference type="InterPro" id="IPR015421">
    <property type="entry name" value="PyrdxlP-dep_Trfase_major"/>
</dbReference>
<dbReference type="InterPro" id="IPR015422">
    <property type="entry name" value="PyrdxlP-dep_Trfase_small"/>
</dbReference>
<dbReference type="NCBIfam" id="TIGR03246">
    <property type="entry name" value="arg_catab_astC"/>
    <property type="match status" value="1"/>
</dbReference>
<dbReference type="NCBIfam" id="TIGR00707">
    <property type="entry name" value="argD"/>
    <property type="match status" value="1"/>
</dbReference>
<dbReference type="NCBIfam" id="NF002325">
    <property type="entry name" value="PRK01278.1"/>
    <property type="match status" value="1"/>
</dbReference>
<dbReference type="NCBIfam" id="NF003468">
    <property type="entry name" value="PRK05093.1"/>
    <property type="match status" value="1"/>
</dbReference>
<dbReference type="NCBIfam" id="NF009047">
    <property type="entry name" value="PRK12381.1"/>
    <property type="match status" value="1"/>
</dbReference>
<dbReference type="PANTHER" id="PTHR11986">
    <property type="entry name" value="AMINOTRANSFERASE CLASS III"/>
    <property type="match status" value="1"/>
</dbReference>
<dbReference type="PANTHER" id="PTHR11986:SF113">
    <property type="entry name" value="SUCCINYLORNITHINE TRANSAMINASE"/>
    <property type="match status" value="1"/>
</dbReference>
<dbReference type="Pfam" id="PF00202">
    <property type="entry name" value="Aminotran_3"/>
    <property type="match status" value="1"/>
</dbReference>
<dbReference type="PIRSF" id="PIRSF000521">
    <property type="entry name" value="Transaminase_4ab_Lys_Orn"/>
    <property type="match status" value="1"/>
</dbReference>
<dbReference type="SUPFAM" id="SSF53383">
    <property type="entry name" value="PLP-dependent transferases"/>
    <property type="match status" value="1"/>
</dbReference>
<dbReference type="PROSITE" id="PS00600">
    <property type="entry name" value="AA_TRANSFER_CLASS_3"/>
    <property type="match status" value="1"/>
</dbReference>
<feature type="chain" id="PRO_0000112769" description="Acetylornithine aminotransferase">
    <location>
        <begin position="1"/>
        <end position="406"/>
    </location>
</feature>
<feature type="binding site" evidence="1">
    <location>
        <begin position="108"/>
        <end position="109"/>
    </location>
    <ligand>
        <name>pyridoxal 5'-phosphate</name>
        <dbReference type="ChEBI" id="CHEBI:597326"/>
    </ligand>
</feature>
<feature type="binding site" evidence="1">
    <location>
        <position position="141"/>
    </location>
    <ligand>
        <name>pyridoxal 5'-phosphate</name>
        <dbReference type="ChEBI" id="CHEBI:597326"/>
    </ligand>
</feature>
<feature type="binding site" evidence="1">
    <location>
        <position position="144"/>
    </location>
    <ligand>
        <name>N(2)-acetyl-L-ornithine</name>
        <dbReference type="ChEBI" id="CHEBI:57805"/>
    </ligand>
</feature>
<feature type="binding site" evidence="1">
    <location>
        <begin position="226"/>
        <end position="229"/>
    </location>
    <ligand>
        <name>pyridoxal 5'-phosphate</name>
        <dbReference type="ChEBI" id="CHEBI:597326"/>
    </ligand>
</feature>
<feature type="binding site" evidence="1">
    <location>
        <position position="283"/>
    </location>
    <ligand>
        <name>N(2)-acetyl-L-ornithine</name>
        <dbReference type="ChEBI" id="CHEBI:57805"/>
    </ligand>
</feature>
<feature type="binding site" evidence="1">
    <location>
        <position position="284"/>
    </location>
    <ligand>
        <name>pyridoxal 5'-phosphate</name>
        <dbReference type="ChEBI" id="CHEBI:597326"/>
    </ligand>
</feature>
<feature type="modified residue" description="N6-(pyridoxal phosphate)lysine" evidence="1">
    <location>
        <position position="255"/>
    </location>
</feature>
<accession>P59319</accession>
<evidence type="ECO:0000255" key="1">
    <source>
        <dbReference type="HAMAP-Rule" id="MF_01107"/>
    </source>
</evidence>
<name>ARGD_PSEPK</name>
<gene>
    <name evidence="1" type="primary">argD</name>
    <name type="ordered locus">PP_4481</name>
</gene>
<proteinExistence type="inferred from homology"/>
<sequence>MSVEQAPVQRADFDQVMVPNYSPAAFIPVRGEGSRVWDQSGRELIDFAGGIAVNALGHCHPALVKALTEQANTLWHVSNVFTNEPALRLAHKLVDATFADRAFFCNSGAESNEAAFKLARRVAHDRFGPQKHEIIATVNSFHGRTLFTVSVGGQPKYSDGFGPKITGISHVPYNDLEALKAQISDKTCAVVIEPIQGESGVVPADKAYLEGARKLCDEHNALLIFDEVQTGVGRTGSLYAYQHYGVIPDILTSAKSLGGGFPIGAMLTTTELAKHLAVGTHGTTYGGNPLGCAVACAVLDVVNTPETLAGIKAKHERFKTRLEQIGQQYNLFSQVRGVGLLLGCVLTEAWKGKAKDVLNAAEKEGVMVLQAGPDVVRFAPSLVVEDADIDEGLDRFERAVATLTKG</sequence>
<keyword id="KW-0028">Amino-acid biosynthesis</keyword>
<keyword id="KW-0032">Aminotransferase</keyword>
<keyword id="KW-0055">Arginine biosynthesis</keyword>
<keyword id="KW-0963">Cytoplasm</keyword>
<keyword id="KW-0663">Pyridoxal phosphate</keyword>
<keyword id="KW-1185">Reference proteome</keyword>
<keyword id="KW-0808">Transferase</keyword>
<protein>
    <recommendedName>
        <fullName evidence="1">Acetylornithine aminotransferase</fullName>
        <shortName evidence="1">ACOAT</shortName>
        <ecNumber evidence="1">2.6.1.11</ecNumber>
    </recommendedName>
</protein>
<organism>
    <name type="scientific">Pseudomonas putida (strain ATCC 47054 / DSM 6125 / CFBP 8728 / NCIMB 11950 / KT2440)</name>
    <dbReference type="NCBI Taxonomy" id="160488"/>
    <lineage>
        <taxon>Bacteria</taxon>
        <taxon>Pseudomonadati</taxon>
        <taxon>Pseudomonadota</taxon>
        <taxon>Gammaproteobacteria</taxon>
        <taxon>Pseudomonadales</taxon>
        <taxon>Pseudomonadaceae</taxon>
        <taxon>Pseudomonas</taxon>
    </lineage>
</organism>
<comment type="catalytic activity">
    <reaction evidence="1">
        <text>N(2)-acetyl-L-ornithine + 2-oxoglutarate = N-acetyl-L-glutamate 5-semialdehyde + L-glutamate</text>
        <dbReference type="Rhea" id="RHEA:18049"/>
        <dbReference type="ChEBI" id="CHEBI:16810"/>
        <dbReference type="ChEBI" id="CHEBI:29123"/>
        <dbReference type="ChEBI" id="CHEBI:29985"/>
        <dbReference type="ChEBI" id="CHEBI:57805"/>
        <dbReference type="EC" id="2.6.1.11"/>
    </reaction>
</comment>
<comment type="cofactor">
    <cofactor evidence="1">
        <name>pyridoxal 5'-phosphate</name>
        <dbReference type="ChEBI" id="CHEBI:597326"/>
    </cofactor>
    <text evidence="1">Binds 1 pyridoxal phosphate per subunit.</text>
</comment>
<comment type="pathway">
    <text evidence="1">Amino-acid biosynthesis; L-arginine biosynthesis; N(2)-acetyl-L-ornithine from L-glutamate: step 4/4.</text>
</comment>
<comment type="subunit">
    <text evidence="1">Homodimer.</text>
</comment>
<comment type="subcellular location">
    <subcellularLocation>
        <location evidence="1">Cytoplasm</location>
    </subcellularLocation>
</comment>
<comment type="miscellaneous">
    <text evidence="1">May also have succinyldiaminopimelate aminotransferase activity, thus carrying out the corresponding step in lysine biosynthesis.</text>
</comment>
<comment type="similarity">
    <text evidence="1">Belongs to the class-III pyridoxal-phosphate-dependent aminotransferase family. ArgD subfamily.</text>
</comment>
<reference key="1">
    <citation type="journal article" date="2002" name="Environ. Microbiol.">
        <title>Complete genome sequence and comparative analysis of the metabolically versatile Pseudomonas putida KT2440.</title>
        <authorList>
            <person name="Nelson K.E."/>
            <person name="Weinel C."/>
            <person name="Paulsen I.T."/>
            <person name="Dodson R.J."/>
            <person name="Hilbert H."/>
            <person name="Martins dos Santos V.A.P."/>
            <person name="Fouts D.E."/>
            <person name="Gill S.R."/>
            <person name="Pop M."/>
            <person name="Holmes M."/>
            <person name="Brinkac L.M."/>
            <person name="Beanan M.J."/>
            <person name="DeBoy R.T."/>
            <person name="Daugherty S.C."/>
            <person name="Kolonay J.F."/>
            <person name="Madupu R."/>
            <person name="Nelson W.C."/>
            <person name="White O."/>
            <person name="Peterson J.D."/>
            <person name="Khouri H.M."/>
            <person name="Hance I."/>
            <person name="Chris Lee P."/>
            <person name="Holtzapple E.K."/>
            <person name="Scanlan D."/>
            <person name="Tran K."/>
            <person name="Moazzez A."/>
            <person name="Utterback T.R."/>
            <person name="Rizzo M."/>
            <person name="Lee K."/>
            <person name="Kosack D."/>
            <person name="Moestl D."/>
            <person name="Wedler H."/>
            <person name="Lauber J."/>
            <person name="Stjepandic D."/>
            <person name="Hoheisel J."/>
            <person name="Straetz M."/>
            <person name="Heim S."/>
            <person name="Kiewitz C."/>
            <person name="Eisen J.A."/>
            <person name="Timmis K.N."/>
            <person name="Duesterhoeft A."/>
            <person name="Tuemmler B."/>
            <person name="Fraser C.M."/>
        </authorList>
    </citation>
    <scope>NUCLEOTIDE SEQUENCE [LARGE SCALE GENOMIC DNA]</scope>
    <source>
        <strain>ATCC 47054 / DSM 6125 / CFBP 8728 / NCIMB 11950 / KT2440</strain>
    </source>
</reference>